<feature type="initiator methionine" description="Removed" evidence="1">
    <location>
        <position position="1"/>
    </location>
</feature>
<feature type="chain" id="PRO_0000058326" description="Peroxisomal membrane protein PEX14">
    <location>
        <begin position="2"/>
        <end position="376"/>
    </location>
</feature>
<feature type="topological domain" description="Peroxisomal" evidence="3">
    <location>
        <begin position="2"/>
        <end position="108"/>
    </location>
</feature>
<feature type="transmembrane region" description="Helical" evidence="4">
    <location>
        <begin position="109"/>
        <end position="127"/>
    </location>
</feature>
<feature type="topological domain" description="Cytoplasmic" evidence="3">
    <location>
        <begin position="128"/>
        <end position="376"/>
    </location>
</feature>
<feature type="region of interest" description="Disordered" evidence="5">
    <location>
        <begin position="1"/>
        <end position="24"/>
    </location>
</feature>
<feature type="region of interest" description="Disordered" evidence="5">
    <location>
        <begin position="70"/>
        <end position="102"/>
    </location>
</feature>
<feature type="region of interest" description="Disordered" evidence="5">
    <location>
        <begin position="230"/>
        <end position="376"/>
    </location>
</feature>
<feature type="compositionally biased region" description="Polar residues" evidence="5">
    <location>
        <begin position="1"/>
        <end position="12"/>
    </location>
</feature>
<feature type="compositionally biased region" description="Pro residues" evidence="5">
    <location>
        <begin position="88"/>
        <end position="99"/>
    </location>
</feature>
<feature type="compositionally biased region" description="Low complexity" evidence="5">
    <location>
        <begin position="247"/>
        <end position="259"/>
    </location>
</feature>
<feature type="compositionally biased region" description="Low complexity" evidence="5">
    <location>
        <begin position="265"/>
        <end position="275"/>
    </location>
</feature>
<feature type="compositionally biased region" description="Acidic residues" evidence="5">
    <location>
        <begin position="323"/>
        <end position="341"/>
    </location>
</feature>
<feature type="compositionally biased region" description="Basic and acidic residues" evidence="5">
    <location>
        <begin position="359"/>
        <end position="376"/>
    </location>
</feature>
<feature type="modified residue" description="N-acetylalanine" evidence="1">
    <location>
        <position position="2"/>
    </location>
</feature>
<feature type="modified residue" description="N6-acetyllysine" evidence="1">
    <location>
        <position position="34"/>
    </location>
</feature>
<feature type="modified residue" description="Phosphoserine" evidence="1">
    <location>
        <position position="232"/>
    </location>
</feature>
<feature type="modified residue" description="Phosphoserine" evidence="3">
    <location>
        <position position="282"/>
    </location>
</feature>
<feature type="modified residue" description="Phosphoserine" evidence="10">
    <location>
        <position position="334"/>
    </location>
</feature>
<sequence>MASSEQAEQPNQPSSPPGSENVVPREPLIATAVKFLQNSRVRQSPLATRRAFLKKKGLTDEEIDLAFQQSGTAADEPSPLGPATPVVPVQPPHLTPQPYSPRGSRWRDYGALAIIMAGIAFGFHQLYKRYLLPLILGGREDRKQLERMAASLSELSGTVAQTVTQVQTTLASVQELLRQQQQKVQELAHELATAKATTSTNWILESQNINELKSEINSLKGLLLNRRQFPPSPSAPKIPSWQIPVKSSSPSSPAAVNHHSSSDISPVSNESTSSSPGKDSHSPEGSTATYHLLGPQEEGEGVLDVKGQVRMEVQGEEEKREDKEDEDDEDDDVSHVDEEDVLGVQREDRRGGDGQINEQVEKLRRPEGASNETERD</sequence>
<keyword id="KW-0007">Acetylation</keyword>
<keyword id="KW-0903">Direct protein sequencing</keyword>
<keyword id="KW-0472">Membrane</keyword>
<keyword id="KW-0576">Peroxisome</keyword>
<keyword id="KW-0597">Phosphoprotein</keyword>
<keyword id="KW-0653">Protein transport</keyword>
<keyword id="KW-1185">Reference proteome</keyword>
<keyword id="KW-0811">Translocation</keyword>
<keyword id="KW-0812">Transmembrane</keyword>
<keyword id="KW-1133">Transmembrane helix</keyword>
<keyword id="KW-0813">Transport</keyword>
<name>PEX14_MOUSE</name>
<dbReference type="EMBL" id="AF097512">
    <property type="protein sequence ID" value="AAF04616.1"/>
    <property type="molecule type" value="mRNA"/>
</dbReference>
<dbReference type="EMBL" id="BC028952">
    <property type="protein sequence ID" value="AAH28952.1"/>
    <property type="molecule type" value="mRNA"/>
</dbReference>
<dbReference type="CCDS" id="CCDS18950.1"/>
<dbReference type="RefSeq" id="NP_062755.1">
    <property type="nucleotide sequence ID" value="NM_019781.3"/>
</dbReference>
<dbReference type="SMR" id="Q9R0A0"/>
<dbReference type="BioGRID" id="207868">
    <property type="interactions" value="13"/>
</dbReference>
<dbReference type="FunCoup" id="Q9R0A0">
    <property type="interactions" value="1672"/>
</dbReference>
<dbReference type="IntAct" id="Q9R0A0">
    <property type="interactions" value="1"/>
</dbReference>
<dbReference type="STRING" id="10090.ENSMUSP00000099506"/>
<dbReference type="GlyGen" id="Q9R0A0">
    <property type="glycosylation" value="1 site, 1 N-linked glycan (1 site)"/>
</dbReference>
<dbReference type="iPTMnet" id="Q9R0A0"/>
<dbReference type="PhosphoSitePlus" id="Q9R0A0"/>
<dbReference type="jPOST" id="Q9R0A0"/>
<dbReference type="PaxDb" id="10090-ENSMUSP00000099506"/>
<dbReference type="PeptideAtlas" id="Q9R0A0"/>
<dbReference type="ProteomicsDB" id="301793"/>
<dbReference type="Pumba" id="Q9R0A0"/>
<dbReference type="Antibodypedia" id="27930">
    <property type="antibodies" value="311 antibodies from 33 providers"/>
</dbReference>
<dbReference type="Ensembl" id="ENSMUST00000103217.11">
    <property type="protein sequence ID" value="ENSMUSP00000099506.5"/>
    <property type="gene ID" value="ENSMUSG00000028975.17"/>
</dbReference>
<dbReference type="GeneID" id="56273"/>
<dbReference type="KEGG" id="mmu:56273"/>
<dbReference type="UCSC" id="uc008vvp.1">
    <property type="organism name" value="mouse"/>
</dbReference>
<dbReference type="AGR" id="MGI:1927868"/>
<dbReference type="CTD" id="5195"/>
<dbReference type="MGI" id="MGI:1927868">
    <property type="gene designation" value="Pex14"/>
</dbReference>
<dbReference type="VEuPathDB" id="HostDB:ENSMUSG00000028975"/>
<dbReference type="eggNOG" id="KOG2629">
    <property type="taxonomic scope" value="Eukaryota"/>
</dbReference>
<dbReference type="GeneTree" id="ENSGT00390000015047"/>
<dbReference type="HOGENOM" id="CLU_065928_0_0_1"/>
<dbReference type="InParanoid" id="Q9R0A0"/>
<dbReference type="OMA" id="YNQWQPP"/>
<dbReference type="OrthoDB" id="441517at2759"/>
<dbReference type="PhylomeDB" id="Q9R0A0"/>
<dbReference type="TreeFam" id="TF323535"/>
<dbReference type="Reactome" id="R-MMU-8866654">
    <property type="pathway name" value="E3 ubiquitin ligases ubiquitinate target proteins"/>
</dbReference>
<dbReference type="Reactome" id="R-MMU-9033241">
    <property type="pathway name" value="Peroxisomal protein import"/>
</dbReference>
<dbReference type="Reactome" id="R-MMU-9603798">
    <property type="pathway name" value="Class I peroxisomal membrane protein import"/>
</dbReference>
<dbReference type="BioGRID-ORCS" id="56273">
    <property type="hits" value="4 hits in 77 CRISPR screens"/>
</dbReference>
<dbReference type="CD-CODE" id="CE726F99">
    <property type="entry name" value="Postsynaptic density"/>
</dbReference>
<dbReference type="ChiTaRS" id="Pex14">
    <property type="organism name" value="mouse"/>
</dbReference>
<dbReference type="PRO" id="PR:Q9R0A0"/>
<dbReference type="Proteomes" id="UP000000589">
    <property type="component" value="Chromosome 4"/>
</dbReference>
<dbReference type="RNAct" id="Q9R0A0">
    <property type="molecule type" value="protein"/>
</dbReference>
<dbReference type="Bgee" id="ENSMUSG00000028975">
    <property type="expression patterns" value="Expressed in otic placode and 262 other cell types or tissues"/>
</dbReference>
<dbReference type="ExpressionAtlas" id="Q9R0A0">
    <property type="expression patterns" value="baseline and differential"/>
</dbReference>
<dbReference type="GO" id="GO:0001650">
    <property type="term" value="C:fibrillar center"/>
    <property type="evidence" value="ECO:0007669"/>
    <property type="project" value="Ensembl"/>
</dbReference>
<dbReference type="GO" id="GO:0005778">
    <property type="term" value="C:peroxisomal membrane"/>
    <property type="evidence" value="ECO:0000314"/>
    <property type="project" value="MGI"/>
</dbReference>
<dbReference type="GO" id="GO:0005777">
    <property type="term" value="C:peroxisome"/>
    <property type="evidence" value="ECO:0000314"/>
    <property type="project" value="UniProtKB"/>
</dbReference>
<dbReference type="GO" id="GO:0032991">
    <property type="term" value="C:protein-containing complex"/>
    <property type="evidence" value="ECO:0007669"/>
    <property type="project" value="Ensembl"/>
</dbReference>
<dbReference type="GO" id="GO:0048487">
    <property type="term" value="F:beta-tubulin binding"/>
    <property type="evidence" value="ECO:0007669"/>
    <property type="project" value="Ensembl"/>
</dbReference>
<dbReference type="GO" id="GO:0042802">
    <property type="term" value="F:identical protein binding"/>
    <property type="evidence" value="ECO:0007669"/>
    <property type="project" value="Ensembl"/>
</dbReference>
<dbReference type="GO" id="GO:0008017">
    <property type="term" value="F:microtubule binding"/>
    <property type="evidence" value="ECO:0007669"/>
    <property type="project" value="Ensembl"/>
</dbReference>
<dbReference type="GO" id="GO:0008320">
    <property type="term" value="F:protein transmembrane transporter activity"/>
    <property type="evidence" value="ECO:0000250"/>
    <property type="project" value="UniProtKB"/>
</dbReference>
<dbReference type="GO" id="GO:0030674">
    <property type="term" value="F:protein-macromolecule adaptor activity"/>
    <property type="evidence" value="ECO:0000250"/>
    <property type="project" value="UniProtKB"/>
</dbReference>
<dbReference type="GO" id="GO:0005102">
    <property type="term" value="F:signaling receptor binding"/>
    <property type="evidence" value="ECO:0007669"/>
    <property type="project" value="Ensembl"/>
</dbReference>
<dbReference type="GO" id="GO:0003714">
    <property type="term" value="F:transcription corepressor activity"/>
    <property type="evidence" value="ECO:0007669"/>
    <property type="project" value="Ensembl"/>
</dbReference>
<dbReference type="GO" id="GO:0034614">
    <property type="term" value="P:cellular response to reactive oxygen species"/>
    <property type="evidence" value="ECO:0007669"/>
    <property type="project" value="Ensembl"/>
</dbReference>
<dbReference type="GO" id="GO:0034453">
    <property type="term" value="P:microtubule anchoring"/>
    <property type="evidence" value="ECO:0007669"/>
    <property type="project" value="Ensembl"/>
</dbReference>
<dbReference type="GO" id="GO:0036250">
    <property type="term" value="P:peroxisome transport along microtubule"/>
    <property type="evidence" value="ECO:0007669"/>
    <property type="project" value="Ensembl"/>
</dbReference>
<dbReference type="GO" id="GO:0016560">
    <property type="term" value="P:protein import into peroxisome matrix, docking"/>
    <property type="evidence" value="ECO:0000250"/>
    <property type="project" value="UniProtKB"/>
</dbReference>
<dbReference type="GO" id="GO:0044721">
    <property type="term" value="P:protein import into peroxisome matrix, substrate release"/>
    <property type="evidence" value="ECO:0007669"/>
    <property type="project" value="Ensembl"/>
</dbReference>
<dbReference type="GO" id="GO:0016561">
    <property type="term" value="P:protein import into peroxisome matrix, translocation"/>
    <property type="evidence" value="ECO:0007669"/>
    <property type="project" value="Ensembl"/>
</dbReference>
<dbReference type="GO" id="GO:0065003">
    <property type="term" value="P:protein-containing complex assembly"/>
    <property type="evidence" value="ECO:0007669"/>
    <property type="project" value="Ensembl"/>
</dbReference>
<dbReference type="FunFam" id="1.10.10.10:FF:000296">
    <property type="entry name" value="Peroxisomal membrane protein PEX14"/>
    <property type="match status" value="1"/>
</dbReference>
<dbReference type="Gene3D" id="1.10.10.10">
    <property type="entry name" value="Winged helix-like DNA-binding domain superfamily/Winged helix DNA-binding domain"/>
    <property type="match status" value="1"/>
</dbReference>
<dbReference type="InterPro" id="IPR025655">
    <property type="entry name" value="PEX14"/>
</dbReference>
<dbReference type="InterPro" id="IPR006785">
    <property type="entry name" value="Pex14_N"/>
</dbReference>
<dbReference type="InterPro" id="IPR036388">
    <property type="entry name" value="WH-like_DNA-bd_sf"/>
</dbReference>
<dbReference type="PANTHER" id="PTHR23058">
    <property type="entry name" value="PEROXISOMAL MEMBRANE PROTEIN PEX14"/>
    <property type="match status" value="1"/>
</dbReference>
<dbReference type="PANTHER" id="PTHR23058:SF0">
    <property type="entry name" value="PEROXISOMAL MEMBRANE PROTEIN PEX14"/>
    <property type="match status" value="1"/>
</dbReference>
<dbReference type="Pfam" id="PF04695">
    <property type="entry name" value="Pex14_N"/>
    <property type="match status" value="1"/>
</dbReference>
<accession>Q9R0A0</accession>
<comment type="function">
    <text evidence="1 2">Component of the PEX13-PEX14 docking complex, a translocon channel that specifically mediates the import of peroxisomal cargo proteins bound to PEX5 receptor (By similarity). The PEX13-PEX14 docking complex forms a large import pore which can be opened to a diameter of about 9 nm (By similarity). Mechanistically, PEX5 receptor along with cargo proteins associates with the PEX14 subunit of the PEX13-PEX14 docking complex in the cytosol, leading to the insertion of the receptor into the organelle membrane with the concomitant translocation of the cargo into the peroxisome matrix. Plays a key role for peroxisome movement through a direct interaction with tubulin (By similarity).</text>
</comment>
<comment type="subunit">
    <text evidence="1">Interacts with PEX13; forming the PEX13-PEX14 docking complex. Interacts with PEX5 (via WxxxF/Y motifs). Interacts with PEX19. Interacts with tubulin.</text>
</comment>
<comment type="subcellular location">
    <subcellularLocation>
        <location evidence="6">Peroxisome membrane</location>
        <topology evidence="3">Single-pass membrane protein</topology>
    </subcellularLocation>
</comment>
<comment type="similarity">
    <text evidence="8">Belongs to the peroxin-14 family.</text>
</comment>
<organism>
    <name type="scientific">Mus musculus</name>
    <name type="common">Mouse</name>
    <dbReference type="NCBI Taxonomy" id="10090"/>
    <lineage>
        <taxon>Eukaryota</taxon>
        <taxon>Metazoa</taxon>
        <taxon>Chordata</taxon>
        <taxon>Craniata</taxon>
        <taxon>Vertebrata</taxon>
        <taxon>Euteleostomi</taxon>
        <taxon>Mammalia</taxon>
        <taxon>Eutheria</taxon>
        <taxon>Euarchontoglires</taxon>
        <taxon>Glires</taxon>
        <taxon>Rodentia</taxon>
        <taxon>Myomorpha</taxon>
        <taxon>Muroidea</taxon>
        <taxon>Muridae</taxon>
        <taxon>Murinae</taxon>
        <taxon>Mus</taxon>
        <taxon>Mus</taxon>
    </lineage>
</organism>
<proteinExistence type="evidence at protein level"/>
<protein>
    <recommendedName>
        <fullName evidence="8">Peroxisomal membrane protein PEX14</fullName>
    </recommendedName>
    <alternativeName>
        <fullName>PTS1 receptor-docking protein</fullName>
    </alternativeName>
    <alternativeName>
        <fullName evidence="8">Peroxin-14</fullName>
    </alternativeName>
    <alternativeName>
        <fullName>Peroxisomal membrane anchor protein PEX14</fullName>
    </alternativeName>
</protein>
<evidence type="ECO:0000250" key="1">
    <source>
        <dbReference type="UniProtKB" id="O75381"/>
    </source>
</evidence>
<evidence type="ECO:0000250" key="2">
    <source>
        <dbReference type="UniProtKB" id="P53112"/>
    </source>
</evidence>
<evidence type="ECO:0000250" key="3">
    <source>
        <dbReference type="UniProtKB" id="Q642G4"/>
    </source>
</evidence>
<evidence type="ECO:0000255" key="4"/>
<evidence type="ECO:0000256" key="5">
    <source>
        <dbReference type="SAM" id="MobiDB-lite"/>
    </source>
</evidence>
<evidence type="ECO:0000269" key="6">
    <source>
    </source>
</evidence>
<evidence type="ECO:0000303" key="7">
    <source>
    </source>
</evidence>
<evidence type="ECO:0000305" key="8"/>
<evidence type="ECO:0000312" key="9">
    <source>
        <dbReference type="MGI" id="MGI:1927868"/>
    </source>
</evidence>
<evidence type="ECO:0007744" key="10">
    <source>
    </source>
</evidence>
<reference key="1">
    <citation type="submission" date="1998-10" db="EMBL/GenBank/DDBJ databases">
        <title>Physical linkage of Pex14 and Cast genes on mouse chromosome 4.</title>
        <authorList>
            <person name="Bliskovsky V."/>
            <person name="Miller M."/>
            <person name="Mock B."/>
        </authorList>
    </citation>
    <scope>NUCLEOTIDE SEQUENCE [MRNA]</scope>
</reference>
<reference key="2">
    <citation type="journal article" date="2004" name="Genome Res.">
        <title>The status, quality, and expansion of the NIH full-length cDNA project: the Mammalian Gene Collection (MGC).</title>
        <authorList>
            <consortium name="The MGC Project Team"/>
        </authorList>
    </citation>
    <scope>NUCLEOTIDE SEQUENCE [LARGE SCALE MRNA]</scope>
    <source>
        <strain>C57BL/6J</strain>
        <tissue>Retina</tissue>
    </source>
</reference>
<reference key="3">
    <citation type="submission" date="2009-01" db="UniProtKB">
        <authorList>
            <person name="Lubec G."/>
            <person name="Sunyer B."/>
            <person name="Chen W.-Q."/>
        </authorList>
    </citation>
    <scope>PROTEIN SEQUENCE OF 228-237</scope>
    <scope>IDENTIFICATION BY MASS SPECTROMETRY</scope>
    <source>
        <strain>OF1</strain>
        <tissue>Hippocampus</tissue>
    </source>
</reference>
<reference key="4">
    <citation type="journal article" date="2002" name="Biochim. Biophys. Acta">
        <title>Mammalian Pex14p: membrane topology and characterisation of the Pex14p-Pex14p interaction.</title>
        <authorList>
            <person name="Oliveira M.E."/>
            <person name="Reguenga C."/>
            <person name="Gouveia A.M."/>
            <person name="Guimaraes C.P."/>
            <person name="Schliebs W."/>
            <person name="Kunau W.H."/>
            <person name="Silva M.T."/>
            <person name="Sa-Miranda C."/>
            <person name="Azevedo J.E."/>
        </authorList>
    </citation>
    <scope>SUBCELLULAR LOCATION</scope>
</reference>
<reference key="5">
    <citation type="journal article" date="2007" name="Proc. Natl. Acad. Sci. U.S.A.">
        <title>Large-scale phosphorylation analysis of mouse liver.</title>
        <authorList>
            <person name="Villen J."/>
            <person name="Beausoleil S.A."/>
            <person name="Gerber S.A."/>
            <person name="Gygi S.P."/>
        </authorList>
    </citation>
    <scope>PHOSPHORYLATION [LARGE SCALE ANALYSIS] AT SER-334</scope>
    <scope>IDENTIFICATION BY MASS SPECTROMETRY [LARGE SCALE ANALYSIS]</scope>
    <source>
        <tissue>Liver</tissue>
    </source>
</reference>
<reference key="6">
    <citation type="journal article" date="2010" name="Cell">
        <title>A tissue-specific atlas of mouse protein phosphorylation and expression.</title>
        <authorList>
            <person name="Huttlin E.L."/>
            <person name="Jedrychowski M.P."/>
            <person name="Elias J.E."/>
            <person name="Goswami T."/>
            <person name="Rad R."/>
            <person name="Beausoleil S.A."/>
            <person name="Villen J."/>
            <person name="Haas W."/>
            <person name="Sowa M.E."/>
            <person name="Gygi S.P."/>
        </authorList>
    </citation>
    <scope>IDENTIFICATION BY MASS SPECTROMETRY [LARGE SCALE ANALYSIS]</scope>
    <source>
        <tissue>Brain</tissue>
        <tissue>Brown adipose tissue</tissue>
        <tissue>Heart</tissue>
        <tissue>Kidney</tissue>
        <tissue>Liver</tissue>
        <tissue>Lung</tissue>
        <tissue>Spleen</tissue>
        <tissue>Testis</tissue>
    </source>
</reference>
<gene>
    <name evidence="7 9" type="primary">Pex14</name>
</gene>